<gene>
    <name type="ordered locus">SAOUHSC_00958</name>
</gene>
<evidence type="ECO:0000255" key="1"/>
<evidence type="ECO:0000255" key="2">
    <source>
        <dbReference type="PROSITE-ProRule" id="PRU00143"/>
    </source>
</evidence>
<evidence type="ECO:0000256" key="3">
    <source>
        <dbReference type="SAM" id="MobiDB-lite"/>
    </source>
</evidence>
<evidence type="ECO:0000305" key="4"/>
<organism>
    <name type="scientific">Staphylococcus aureus (strain NCTC 8325 / PS 47)</name>
    <dbReference type="NCBI Taxonomy" id="93061"/>
    <lineage>
        <taxon>Bacteria</taxon>
        <taxon>Bacillati</taxon>
        <taxon>Bacillota</taxon>
        <taxon>Bacilli</taxon>
        <taxon>Bacillales</taxon>
        <taxon>Staphylococcaceae</taxon>
        <taxon>Staphylococcus</taxon>
    </lineage>
</organism>
<protein>
    <recommendedName>
        <fullName>Serine protease HtrA-like</fullName>
        <ecNumber>3.4.21.-</ecNumber>
    </recommendedName>
</protein>
<accession>Q2FZP2</accession>
<comment type="subcellular location">
    <subcellularLocation>
        <location evidence="4">Cell membrane</location>
        <topology evidence="4">Single-pass membrane protein</topology>
    </subcellularLocation>
</comment>
<comment type="similarity">
    <text evidence="4">Belongs to the peptidase S1C family.</text>
</comment>
<comment type="sequence caution" evidence="4">
    <conflict type="erroneous initiation">
        <sequence resource="EMBL-CDS" id="ABD30083"/>
    </conflict>
</comment>
<reference key="1">
    <citation type="book" date="2006" name="Gram positive pathogens, 2nd edition">
        <title>The Staphylococcus aureus NCTC 8325 genome.</title>
        <editorList>
            <person name="Fischetti V."/>
            <person name="Novick R."/>
            <person name="Ferretti J."/>
            <person name="Portnoy D."/>
            <person name="Rood J."/>
        </editorList>
        <authorList>
            <person name="Gillaspy A.F."/>
            <person name="Worrell V."/>
            <person name="Orvis J."/>
            <person name="Roe B.A."/>
            <person name="Dyer D.W."/>
            <person name="Iandolo J.J."/>
        </authorList>
    </citation>
    <scope>NUCLEOTIDE SEQUENCE [LARGE SCALE GENOMIC DNA]</scope>
    <source>
        <strain>NCTC 8325 / PS 47</strain>
    </source>
</reference>
<sequence length="769" mass="86460">MDIGKKHVIPKSQYRRKRREFFHNEDREENLNQHQDKQNIDNTTSKKADKQIHKDSIDKHERFKNSLSSHLEQRNRDVNENKAEESKSNQDSKSAYNRDHYLTDDVSKKQNSLDSVDQDTEKSKYYEQNSEATLSTKSTDKVESTEMRKLSSDKNKVGHEEQHVLSKPSEHDKETRIDSESSRTDSDSSMQTEKIKKDSSDGNKSSNLKSEVISDKSNTVPKLSESDDEVNNQKPLTLPEEQKLKRQQSQNEQTKTYTYGDSEQNDKSNHENDLSHHIPSISDDKDNVMRENHIVDDNPDNDINTPSLSKTDDDRKLDEKIHVEDKHKQNADSSETVGYQSQSTASHRSTEKRNISINDHDKLNGQKTNTKTSANNNQKKATSKLNKGRATNNNYSDILKKFWMMYWPKLVILMGIIILIVILNAIFNNVNKNDRMNDNNDADAQKYTTTMKNANNTVKSVVTVENETSKDSSLPKDKASQDEVGSGVVYKKSGDTLYIVTNAHVVGDKENQKITFSNNKSVVGKVLGKDKWSDLAVVKATSSDSSVKEIAIGDSNNLVLGEPILVVGNPLGVDFKGTVTEGIISGLNRNVPIDFDKDNKYDMLMKAFQIDASVNPGNSGGAVVNREGKLIGVVAAKISMPNVENMSFAIPVNEVQKIVKDLETKGKIDYPDVGVKMKNIVSLNSFERQAVKLPGKVKNGVVVDQVDNNGLADQSGLKKGDVITELDGKLLEDDLRFRQIIFSHKDDLKSITAKIYRDGKEKEINIKLK</sequence>
<proteinExistence type="inferred from homology"/>
<feature type="chain" id="PRO_0000252463" description="Serine protease HtrA-like">
    <location>
        <begin position="1"/>
        <end position="769"/>
    </location>
</feature>
<feature type="transmembrane region" description="Helical" evidence="1">
    <location>
        <begin position="410"/>
        <end position="430"/>
    </location>
</feature>
<feature type="domain" description="PDZ" evidence="2">
    <location>
        <begin position="680"/>
        <end position="733"/>
    </location>
</feature>
<feature type="region of interest" description="Disordered" evidence="3">
    <location>
        <begin position="1"/>
        <end position="390"/>
    </location>
</feature>
<feature type="compositionally biased region" description="Basic residues" evidence="3">
    <location>
        <begin position="1"/>
        <end position="20"/>
    </location>
</feature>
<feature type="compositionally biased region" description="Basic and acidic residues" evidence="3">
    <location>
        <begin position="21"/>
        <end position="64"/>
    </location>
</feature>
<feature type="compositionally biased region" description="Basic and acidic residues" evidence="3">
    <location>
        <begin position="71"/>
        <end position="108"/>
    </location>
</feature>
<feature type="compositionally biased region" description="Polar residues" evidence="3">
    <location>
        <begin position="126"/>
        <end position="137"/>
    </location>
</feature>
<feature type="compositionally biased region" description="Basic and acidic residues" evidence="3">
    <location>
        <begin position="138"/>
        <end position="186"/>
    </location>
</feature>
<feature type="compositionally biased region" description="Polar residues" evidence="3">
    <location>
        <begin position="247"/>
        <end position="262"/>
    </location>
</feature>
<feature type="compositionally biased region" description="Basic and acidic residues" evidence="3">
    <location>
        <begin position="264"/>
        <end position="296"/>
    </location>
</feature>
<feature type="compositionally biased region" description="Basic and acidic residues" evidence="3">
    <location>
        <begin position="310"/>
        <end position="330"/>
    </location>
</feature>
<feature type="compositionally biased region" description="Polar residues" evidence="3">
    <location>
        <begin position="331"/>
        <end position="347"/>
    </location>
</feature>
<feature type="compositionally biased region" description="Basic and acidic residues" evidence="3">
    <location>
        <begin position="348"/>
        <end position="364"/>
    </location>
</feature>
<feature type="compositionally biased region" description="Polar residues" evidence="3">
    <location>
        <begin position="365"/>
        <end position="390"/>
    </location>
</feature>
<feature type="active site" description="Charge relay system" evidence="1">
    <location>
        <position position="504"/>
    </location>
</feature>
<feature type="active site" description="Charge relay system" evidence="1">
    <location>
        <position position="534"/>
    </location>
</feature>
<feature type="active site" description="Charge relay system" evidence="1">
    <location>
        <position position="619"/>
    </location>
</feature>
<name>HTRAL_STAA8</name>
<keyword id="KW-1003">Cell membrane</keyword>
<keyword id="KW-0378">Hydrolase</keyword>
<keyword id="KW-0472">Membrane</keyword>
<keyword id="KW-0645">Protease</keyword>
<keyword id="KW-1185">Reference proteome</keyword>
<keyword id="KW-0720">Serine protease</keyword>
<keyword id="KW-0812">Transmembrane</keyword>
<keyword id="KW-1133">Transmembrane helix</keyword>
<dbReference type="EC" id="3.4.21.-"/>
<dbReference type="EMBL" id="CP000253">
    <property type="protein sequence ID" value="ABD30083.1"/>
    <property type="status" value="ALT_INIT"/>
    <property type="molecule type" value="Genomic_DNA"/>
</dbReference>
<dbReference type="RefSeq" id="YP_499511.1">
    <property type="nucleotide sequence ID" value="NC_007795.1"/>
</dbReference>
<dbReference type="SMR" id="Q2FZP2"/>
<dbReference type="STRING" id="93061.SAOUHSC_00958"/>
<dbReference type="PaxDb" id="1280-SAXN108_1019"/>
<dbReference type="GeneID" id="3920669"/>
<dbReference type="KEGG" id="sao:SAOUHSC_00958"/>
<dbReference type="PATRIC" id="fig|93061.5.peg.880"/>
<dbReference type="eggNOG" id="COG0265">
    <property type="taxonomic scope" value="Bacteria"/>
</dbReference>
<dbReference type="HOGENOM" id="CLU_027421_0_0_9"/>
<dbReference type="OrthoDB" id="9758917at2"/>
<dbReference type="Proteomes" id="UP000008816">
    <property type="component" value="Chromosome"/>
</dbReference>
<dbReference type="GO" id="GO:0005886">
    <property type="term" value="C:plasma membrane"/>
    <property type="evidence" value="ECO:0007669"/>
    <property type="project" value="UniProtKB-SubCell"/>
</dbReference>
<dbReference type="GO" id="GO:0004252">
    <property type="term" value="F:serine-type endopeptidase activity"/>
    <property type="evidence" value="ECO:0007669"/>
    <property type="project" value="InterPro"/>
</dbReference>
<dbReference type="GO" id="GO:0006508">
    <property type="term" value="P:proteolysis"/>
    <property type="evidence" value="ECO:0007669"/>
    <property type="project" value="UniProtKB-KW"/>
</dbReference>
<dbReference type="CDD" id="cd06781">
    <property type="entry name" value="cpPDZ_BsHtra-like"/>
    <property type="match status" value="1"/>
</dbReference>
<dbReference type="Gene3D" id="2.30.42.10">
    <property type="match status" value="1"/>
</dbReference>
<dbReference type="Gene3D" id="2.40.10.10">
    <property type="entry name" value="Trypsin-like serine proteases"/>
    <property type="match status" value="2"/>
</dbReference>
<dbReference type="InterPro" id="IPR051201">
    <property type="entry name" value="Chloro_Bact_Ser_Proteases"/>
</dbReference>
<dbReference type="InterPro" id="IPR001478">
    <property type="entry name" value="PDZ"/>
</dbReference>
<dbReference type="InterPro" id="IPR036034">
    <property type="entry name" value="PDZ_sf"/>
</dbReference>
<dbReference type="InterPro" id="IPR009003">
    <property type="entry name" value="Peptidase_S1_PA"/>
</dbReference>
<dbReference type="InterPro" id="IPR043504">
    <property type="entry name" value="Peptidase_S1_PA_chymotrypsin"/>
</dbReference>
<dbReference type="InterPro" id="IPR001940">
    <property type="entry name" value="Peptidase_S1C"/>
</dbReference>
<dbReference type="PANTHER" id="PTHR43343">
    <property type="entry name" value="PEPTIDASE S12"/>
    <property type="match status" value="1"/>
</dbReference>
<dbReference type="PANTHER" id="PTHR43343:SF3">
    <property type="entry name" value="PROTEASE DO-LIKE 8, CHLOROPLASTIC"/>
    <property type="match status" value="1"/>
</dbReference>
<dbReference type="Pfam" id="PF13180">
    <property type="entry name" value="PDZ_2"/>
    <property type="match status" value="1"/>
</dbReference>
<dbReference type="Pfam" id="PF13365">
    <property type="entry name" value="Trypsin_2"/>
    <property type="match status" value="1"/>
</dbReference>
<dbReference type="PRINTS" id="PR00834">
    <property type="entry name" value="PROTEASES2C"/>
</dbReference>
<dbReference type="SMART" id="SM00228">
    <property type="entry name" value="PDZ"/>
    <property type="match status" value="1"/>
</dbReference>
<dbReference type="SUPFAM" id="SSF50156">
    <property type="entry name" value="PDZ domain-like"/>
    <property type="match status" value="1"/>
</dbReference>
<dbReference type="SUPFAM" id="SSF50494">
    <property type="entry name" value="Trypsin-like serine proteases"/>
    <property type="match status" value="1"/>
</dbReference>
<dbReference type="PROSITE" id="PS50106">
    <property type="entry name" value="PDZ"/>
    <property type="match status" value="1"/>
</dbReference>